<sequence length="435" mass="47131">MSIITDVYAREVLDSRGNPTLEVEVYTESGAFGRGMVPSGASTGEHEAVELRDGDKSRYGGLGTQKAVDNVNNVIAEAIIGYDVRDQQAIDRAMIALDGTPNKGKLGANAILGVSIAVARAAADYLEVPLYSYLGGFNTKVLPTPMMNIINGGSHSDAPIAFQEFMIMPVGAPTFKEALRWGAEVFHALKKILKERGLETAVGDEGGFAPKFEGTEDGVETILKAIEAAGYEAGENGIMIGFDCASSEFYDAERKVYDYSKFEGEGGAVRTAAEQIDYLEELVNKYPIITIEDGMDENDWDGWKALTERLGGRVQLVGDDFFVTNTDYLARGIKEEAANSILIKVNQIGTLTETFEAIEMAKEAGYTAVVSHRSGETEDSTIADIAVATNAGQIKTGSLSRTDRIAKYNQLLRIEDQLGEVAQYKGIKSFYNLKK</sequence>
<comment type="function">
    <text evidence="1">Catalyzes the reversible conversion of 2-phosphoglycerate (2-PG) into phosphoenolpyruvate (PEP). It is essential for the degradation of carbohydrates via glycolysis.</text>
</comment>
<comment type="catalytic activity">
    <reaction evidence="1">
        <text>(2R)-2-phosphoglycerate = phosphoenolpyruvate + H2O</text>
        <dbReference type="Rhea" id="RHEA:10164"/>
        <dbReference type="ChEBI" id="CHEBI:15377"/>
        <dbReference type="ChEBI" id="CHEBI:58289"/>
        <dbReference type="ChEBI" id="CHEBI:58702"/>
        <dbReference type="EC" id="4.2.1.11"/>
    </reaction>
</comment>
<comment type="cofactor">
    <cofactor evidence="1">
        <name>Mg(2+)</name>
        <dbReference type="ChEBI" id="CHEBI:18420"/>
    </cofactor>
    <text evidence="1">Binds a second Mg(2+) ion via substrate during catalysis.</text>
</comment>
<comment type="pathway">
    <text evidence="1">Carbohydrate degradation; glycolysis; pyruvate from D-glyceraldehyde 3-phosphate: step 4/5.</text>
</comment>
<comment type="subcellular location">
    <subcellularLocation>
        <location evidence="1">Cytoplasm</location>
    </subcellularLocation>
    <subcellularLocation>
        <location evidence="1">Secreted</location>
    </subcellularLocation>
    <subcellularLocation>
        <location evidence="1">Cell surface</location>
    </subcellularLocation>
    <text evidence="1">Fractions of enolase are present in both the cytoplasm and on the cell surface.</text>
</comment>
<comment type="similarity">
    <text evidence="1">Belongs to the enolase family.</text>
</comment>
<evidence type="ECO:0000255" key="1">
    <source>
        <dbReference type="HAMAP-Rule" id="MF_00318"/>
    </source>
</evidence>
<keyword id="KW-0963">Cytoplasm</keyword>
<keyword id="KW-0324">Glycolysis</keyword>
<keyword id="KW-0456">Lyase</keyword>
<keyword id="KW-0460">Magnesium</keyword>
<keyword id="KW-0479">Metal-binding</keyword>
<keyword id="KW-0964">Secreted</keyword>
<dbReference type="EC" id="4.2.1.11" evidence="1"/>
<dbReference type="EMBL" id="AL766846">
    <property type="protein sequence ID" value="CAD46252.1"/>
    <property type="molecule type" value="Genomic_DNA"/>
</dbReference>
<dbReference type="RefSeq" id="WP_000022832.1">
    <property type="nucleotide sequence ID" value="NC_004368.1"/>
</dbReference>
<dbReference type="SMR" id="P64080"/>
<dbReference type="GeneID" id="66885541"/>
<dbReference type="KEGG" id="san:eno"/>
<dbReference type="eggNOG" id="COG0148">
    <property type="taxonomic scope" value="Bacteria"/>
</dbReference>
<dbReference type="HOGENOM" id="CLU_031223_2_1_9"/>
<dbReference type="UniPathway" id="UPA00109">
    <property type="reaction ID" value="UER00187"/>
</dbReference>
<dbReference type="Proteomes" id="UP000000823">
    <property type="component" value="Chromosome"/>
</dbReference>
<dbReference type="GO" id="GO:0009986">
    <property type="term" value="C:cell surface"/>
    <property type="evidence" value="ECO:0007669"/>
    <property type="project" value="UniProtKB-SubCell"/>
</dbReference>
<dbReference type="GO" id="GO:0005576">
    <property type="term" value="C:extracellular region"/>
    <property type="evidence" value="ECO:0007669"/>
    <property type="project" value="UniProtKB-SubCell"/>
</dbReference>
<dbReference type="GO" id="GO:0009274">
    <property type="term" value="C:peptidoglycan-based cell wall"/>
    <property type="evidence" value="ECO:0007669"/>
    <property type="project" value="UniProtKB-ARBA"/>
</dbReference>
<dbReference type="GO" id="GO:0000015">
    <property type="term" value="C:phosphopyruvate hydratase complex"/>
    <property type="evidence" value="ECO:0007669"/>
    <property type="project" value="InterPro"/>
</dbReference>
<dbReference type="GO" id="GO:0000287">
    <property type="term" value="F:magnesium ion binding"/>
    <property type="evidence" value="ECO:0007669"/>
    <property type="project" value="UniProtKB-UniRule"/>
</dbReference>
<dbReference type="GO" id="GO:0004634">
    <property type="term" value="F:phosphopyruvate hydratase activity"/>
    <property type="evidence" value="ECO:0007669"/>
    <property type="project" value="UniProtKB-UniRule"/>
</dbReference>
<dbReference type="GO" id="GO:0006096">
    <property type="term" value="P:glycolytic process"/>
    <property type="evidence" value="ECO:0007669"/>
    <property type="project" value="UniProtKB-UniRule"/>
</dbReference>
<dbReference type="CDD" id="cd03313">
    <property type="entry name" value="enolase"/>
    <property type="match status" value="1"/>
</dbReference>
<dbReference type="FunFam" id="3.20.20.120:FF:000001">
    <property type="entry name" value="Enolase"/>
    <property type="match status" value="1"/>
</dbReference>
<dbReference type="FunFam" id="3.30.390.10:FF:000001">
    <property type="entry name" value="Enolase"/>
    <property type="match status" value="1"/>
</dbReference>
<dbReference type="Gene3D" id="3.20.20.120">
    <property type="entry name" value="Enolase-like C-terminal domain"/>
    <property type="match status" value="1"/>
</dbReference>
<dbReference type="Gene3D" id="3.30.390.10">
    <property type="entry name" value="Enolase-like, N-terminal domain"/>
    <property type="match status" value="1"/>
</dbReference>
<dbReference type="HAMAP" id="MF_00318">
    <property type="entry name" value="Enolase"/>
    <property type="match status" value="1"/>
</dbReference>
<dbReference type="InterPro" id="IPR000941">
    <property type="entry name" value="Enolase"/>
</dbReference>
<dbReference type="InterPro" id="IPR036849">
    <property type="entry name" value="Enolase-like_C_sf"/>
</dbReference>
<dbReference type="InterPro" id="IPR029017">
    <property type="entry name" value="Enolase-like_N"/>
</dbReference>
<dbReference type="InterPro" id="IPR020810">
    <property type="entry name" value="Enolase_C"/>
</dbReference>
<dbReference type="InterPro" id="IPR020809">
    <property type="entry name" value="Enolase_CS"/>
</dbReference>
<dbReference type="InterPro" id="IPR020811">
    <property type="entry name" value="Enolase_N"/>
</dbReference>
<dbReference type="NCBIfam" id="TIGR01060">
    <property type="entry name" value="eno"/>
    <property type="match status" value="1"/>
</dbReference>
<dbReference type="PANTHER" id="PTHR11902">
    <property type="entry name" value="ENOLASE"/>
    <property type="match status" value="1"/>
</dbReference>
<dbReference type="PANTHER" id="PTHR11902:SF1">
    <property type="entry name" value="ENOLASE"/>
    <property type="match status" value="1"/>
</dbReference>
<dbReference type="Pfam" id="PF00113">
    <property type="entry name" value="Enolase_C"/>
    <property type="match status" value="1"/>
</dbReference>
<dbReference type="Pfam" id="PF03952">
    <property type="entry name" value="Enolase_N"/>
    <property type="match status" value="1"/>
</dbReference>
<dbReference type="PIRSF" id="PIRSF001400">
    <property type="entry name" value="Enolase"/>
    <property type="match status" value="1"/>
</dbReference>
<dbReference type="PRINTS" id="PR00148">
    <property type="entry name" value="ENOLASE"/>
</dbReference>
<dbReference type="SFLD" id="SFLDS00001">
    <property type="entry name" value="Enolase"/>
    <property type="match status" value="1"/>
</dbReference>
<dbReference type="SFLD" id="SFLDF00002">
    <property type="entry name" value="enolase"/>
    <property type="match status" value="1"/>
</dbReference>
<dbReference type="SMART" id="SM01192">
    <property type="entry name" value="Enolase_C"/>
    <property type="match status" value="1"/>
</dbReference>
<dbReference type="SMART" id="SM01193">
    <property type="entry name" value="Enolase_N"/>
    <property type="match status" value="1"/>
</dbReference>
<dbReference type="SUPFAM" id="SSF51604">
    <property type="entry name" value="Enolase C-terminal domain-like"/>
    <property type="match status" value="1"/>
</dbReference>
<dbReference type="SUPFAM" id="SSF54826">
    <property type="entry name" value="Enolase N-terminal domain-like"/>
    <property type="match status" value="1"/>
</dbReference>
<dbReference type="PROSITE" id="PS00164">
    <property type="entry name" value="ENOLASE"/>
    <property type="match status" value="1"/>
</dbReference>
<proteinExistence type="inferred from homology"/>
<accession>P64080</accession>
<accession>Q8E0U2</accession>
<accession>Q8E6G0</accession>
<feature type="chain" id="PRO_0000133973" description="Enolase">
    <location>
        <begin position="1"/>
        <end position="435"/>
    </location>
</feature>
<feature type="active site" description="Proton donor" evidence="1">
    <location>
        <position position="205"/>
    </location>
</feature>
<feature type="active site" description="Proton acceptor" evidence="1">
    <location>
        <position position="344"/>
    </location>
</feature>
<feature type="binding site" evidence="1">
    <location>
        <position position="163"/>
    </location>
    <ligand>
        <name>(2R)-2-phosphoglycerate</name>
        <dbReference type="ChEBI" id="CHEBI:58289"/>
    </ligand>
</feature>
<feature type="binding site" evidence="1">
    <location>
        <position position="243"/>
    </location>
    <ligand>
        <name>Mg(2+)</name>
        <dbReference type="ChEBI" id="CHEBI:18420"/>
    </ligand>
</feature>
<feature type="binding site" evidence="1">
    <location>
        <position position="292"/>
    </location>
    <ligand>
        <name>Mg(2+)</name>
        <dbReference type="ChEBI" id="CHEBI:18420"/>
    </ligand>
</feature>
<feature type="binding site" evidence="1">
    <location>
        <position position="319"/>
    </location>
    <ligand>
        <name>Mg(2+)</name>
        <dbReference type="ChEBI" id="CHEBI:18420"/>
    </ligand>
</feature>
<feature type="binding site" evidence="1">
    <location>
        <position position="344"/>
    </location>
    <ligand>
        <name>(2R)-2-phosphoglycerate</name>
        <dbReference type="ChEBI" id="CHEBI:58289"/>
    </ligand>
</feature>
<feature type="binding site" evidence="1">
    <location>
        <position position="373"/>
    </location>
    <ligand>
        <name>(2R)-2-phosphoglycerate</name>
        <dbReference type="ChEBI" id="CHEBI:58289"/>
    </ligand>
</feature>
<feature type="binding site" evidence="1">
    <location>
        <position position="374"/>
    </location>
    <ligand>
        <name>(2R)-2-phosphoglycerate</name>
        <dbReference type="ChEBI" id="CHEBI:58289"/>
    </ligand>
</feature>
<feature type="binding site" evidence="1">
    <location>
        <position position="395"/>
    </location>
    <ligand>
        <name>(2R)-2-phosphoglycerate</name>
        <dbReference type="ChEBI" id="CHEBI:58289"/>
    </ligand>
</feature>
<protein>
    <recommendedName>
        <fullName evidence="1">Enolase</fullName>
        <ecNumber evidence="1">4.2.1.11</ecNumber>
    </recommendedName>
    <alternativeName>
        <fullName evidence="1">2-phospho-D-glycerate hydro-lyase</fullName>
    </alternativeName>
    <alternativeName>
        <fullName evidence="1">2-phosphoglycerate dehydratase</fullName>
    </alternativeName>
</protein>
<name>ENO_STRA3</name>
<reference key="1">
    <citation type="journal article" date="2002" name="Mol. Microbiol.">
        <title>Genome sequence of Streptococcus agalactiae, a pathogen causing invasive neonatal disease.</title>
        <authorList>
            <person name="Glaser P."/>
            <person name="Rusniok C."/>
            <person name="Buchrieser C."/>
            <person name="Chevalier F."/>
            <person name="Frangeul L."/>
            <person name="Msadek T."/>
            <person name="Zouine M."/>
            <person name="Couve E."/>
            <person name="Lalioui L."/>
            <person name="Poyart C."/>
            <person name="Trieu-Cuot P."/>
            <person name="Kunst F."/>
        </authorList>
    </citation>
    <scope>NUCLEOTIDE SEQUENCE [LARGE SCALE GENOMIC DNA]</scope>
    <source>
        <strain>NEM316</strain>
    </source>
</reference>
<organism>
    <name type="scientific">Streptococcus agalactiae serotype III (strain NEM316)</name>
    <dbReference type="NCBI Taxonomy" id="211110"/>
    <lineage>
        <taxon>Bacteria</taxon>
        <taxon>Bacillati</taxon>
        <taxon>Bacillota</taxon>
        <taxon>Bacilli</taxon>
        <taxon>Lactobacillales</taxon>
        <taxon>Streptococcaceae</taxon>
        <taxon>Streptococcus</taxon>
    </lineage>
</organism>
<gene>
    <name evidence="1" type="primary">eno</name>
    <name type="ordered locus">gbs0608</name>
</gene>